<proteinExistence type="inferred from homology"/>
<reference key="1">
    <citation type="journal article" date="2003" name="Proc. Natl. Acad. Sci. U.S.A.">
        <title>Complete genome sequence of the marine planctomycete Pirellula sp. strain 1.</title>
        <authorList>
            <person name="Gloeckner F.O."/>
            <person name="Kube M."/>
            <person name="Bauer M."/>
            <person name="Teeling H."/>
            <person name="Lombardot T."/>
            <person name="Ludwig W."/>
            <person name="Gade D."/>
            <person name="Beck A."/>
            <person name="Borzym K."/>
            <person name="Heitmann K."/>
            <person name="Rabus R."/>
            <person name="Schlesner H."/>
            <person name="Amann R."/>
            <person name="Reinhardt R."/>
        </authorList>
    </citation>
    <scope>NUCLEOTIDE SEQUENCE [LARGE SCALE GENOMIC DNA]</scope>
    <source>
        <strain>DSM 10527 / NCIMB 13988 / SH1</strain>
    </source>
</reference>
<gene>
    <name evidence="1" type="primary">tdk</name>
    <name type="ordered locus">RB8399</name>
</gene>
<organism>
    <name type="scientific">Rhodopirellula baltica (strain DSM 10527 / NCIMB 13988 / SH1)</name>
    <dbReference type="NCBI Taxonomy" id="243090"/>
    <lineage>
        <taxon>Bacteria</taxon>
        <taxon>Pseudomonadati</taxon>
        <taxon>Planctomycetota</taxon>
        <taxon>Planctomycetia</taxon>
        <taxon>Pirellulales</taxon>
        <taxon>Pirellulaceae</taxon>
        <taxon>Rhodopirellula</taxon>
    </lineage>
</organism>
<protein>
    <recommendedName>
        <fullName evidence="1">Thymidine kinase</fullName>
        <ecNumber evidence="1">2.7.1.21</ecNumber>
    </recommendedName>
</protein>
<evidence type="ECO:0000255" key="1">
    <source>
        <dbReference type="HAMAP-Rule" id="MF_00124"/>
    </source>
</evidence>
<feature type="chain" id="PRO_0000175009" description="Thymidine kinase">
    <location>
        <begin position="1"/>
        <end position="211"/>
    </location>
</feature>
<feature type="active site" description="Proton acceptor" evidence="1">
    <location>
        <position position="88"/>
    </location>
</feature>
<feature type="binding site" evidence="1">
    <location>
        <begin position="9"/>
        <end position="16"/>
    </location>
    <ligand>
        <name>ATP</name>
        <dbReference type="ChEBI" id="CHEBI:30616"/>
    </ligand>
</feature>
<feature type="binding site" evidence="1">
    <location>
        <begin position="87"/>
        <end position="90"/>
    </location>
    <ligand>
        <name>ATP</name>
        <dbReference type="ChEBI" id="CHEBI:30616"/>
    </ligand>
</feature>
<feature type="binding site" evidence="1">
    <location>
        <position position="145"/>
    </location>
    <ligand>
        <name>Zn(2+)</name>
        <dbReference type="ChEBI" id="CHEBI:29105"/>
    </ligand>
</feature>
<feature type="binding site" evidence="1">
    <location>
        <position position="147"/>
    </location>
    <ligand>
        <name>Zn(2+)</name>
        <dbReference type="ChEBI" id="CHEBI:29105"/>
    </ligand>
</feature>
<feature type="binding site" evidence="1">
    <location>
        <position position="182"/>
    </location>
    <ligand>
        <name>Zn(2+)</name>
        <dbReference type="ChEBI" id="CHEBI:29105"/>
    </ligand>
</feature>
<feature type="binding site" evidence="1">
    <location>
        <position position="185"/>
    </location>
    <ligand>
        <name>Zn(2+)</name>
        <dbReference type="ChEBI" id="CHEBI:29105"/>
    </ligand>
</feature>
<dbReference type="EC" id="2.7.1.21" evidence="1"/>
<dbReference type="EMBL" id="BX294147">
    <property type="protein sequence ID" value="CAD78621.1"/>
    <property type="molecule type" value="Genomic_DNA"/>
</dbReference>
<dbReference type="RefSeq" id="NP_868343.1">
    <property type="nucleotide sequence ID" value="NC_005027.1"/>
</dbReference>
<dbReference type="RefSeq" id="WP_007334933.1">
    <property type="nucleotide sequence ID" value="NC_005027.1"/>
</dbReference>
<dbReference type="SMR" id="Q7UFR1"/>
<dbReference type="FunCoup" id="Q7UFR1">
    <property type="interactions" value="242"/>
</dbReference>
<dbReference type="STRING" id="243090.RB8399"/>
<dbReference type="EnsemblBacteria" id="CAD78621">
    <property type="protein sequence ID" value="CAD78621"/>
    <property type="gene ID" value="RB8399"/>
</dbReference>
<dbReference type="KEGG" id="rba:RB8399"/>
<dbReference type="PATRIC" id="fig|243090.15.peg.4046"/>
<dbReference type="eggNOG" id="COG1435">
    <property type="taxonomic scope" value="Bacteria"/>
</dbReference>
<dbReference type="HOGENOM" id="CLU_064400_2_1_0"/>
<dbReference type="InParanoid" id="Q7UFR1"/>
<dbReference type="OrthoDB" id="9781579at2"/>
<dbReference type="Proteomes" id="UP000001025">
    <property type="component" value="Chromosome"/>
</dbReference>
<dbReference type="GO" id="GO:0005829">
    <property type="term" value="C:cytosol"/>
    <property type="evidence" value="ECO:0000318"/>
    <property type="project" value="GO_Central"/>
</dbReference>
<dbReference type="GO" id="GO:0005524">
    <property type="term" value="F:ATP binding"/>
    <property type="evidence" value="ECO:0007669"/>
    <property type="project" value="UniProtKB-UniRule"/>
</dbReference>
<dbReference type="GO" id="GO:0004797">
    <property type="term" value="F:thymidine kinase activity"/>
    <property type="evidence" value="ECO:0000318"/>
    <property type="project" value="GO_Central"/>
</dbReference>
<dbReference type="GO" id="GO:0008270">
    <property type="term" value="F:zinc ion binding"/>
    <property type="evidence" value="ECO:0007669"/>
    <property type="project" value="UniProtKB-UniRule"/>
</dbReference>
<dbReference type="GO" id="GO:0071897">
    <property type="term" value="P:DNA biosynthetic process"/>
    <property type="evidence" value="ECO:0007669"/>
    <property type="project" value="UniProtKB-KW"/>
</dbReference>
<dbReference type="GO" id="GO:0046104">
    <property type="term" value="P:thymidine metabolic process"/>
    <property type="evidence" value="ECO:0000318"/>
    <property type="project" value="GO_Central"/>
</dbReference>
<dbReference type="FunFam" id="3.40.50.300:FF:000323">
    <property type="entry name" value="Thymidine kinase"/>
    <property type="match status" value="1"/>
</dbReference>
<dbReference type="Gene3D" id="3.30.60.20">
    <property type="match status" value="1"/>
</dbReference>
<dbReference type="Gene3D" id="3.40.50.300">
    <property type="entry name" value="P-loop containing nucleotide triphosphate hydrolases"/>
    <property type="match status" value="1"/>
</dbReference>
<dbReference type="HAMAP" id="MF_00124">
    <property type="entry name" value="Thymidine_kinase"/>
    <property type="match status" value="1"/>
</dbReference>
<dbReference type="InterPro" id="IPR027417">
    <property type="entry name" value="P-loop_NTPase"/>
</dbReference>
<dbReference type="InterPro" id="IPR001267">
    <property type="entry name" value="Thymidine_kinase"/>
</dbReference>
<dbReference type="InterPro" id="IPR020633">
    <property type="entry name" value="Thymidine_kinase_CS"/>
</dbReference>
<dbReference type="NCBIfam" id="NF003300">
    <property type="entry name" value="PRK04296.1-5"/>
    <property type="match status" value="1"/>
</dbReference>
<dbReference type="PANTHER" id="PTHR11441">
    <property type="entry name" value="THYMIDINE KINASE"/>
    <property type="match status" value="1"/>
</dbReference>
<dbReference type="PANTHER" id="PTHR11441:SF0">
    <property type="entry name" value="THYMIDINE KINASE, CYTOSOLIC"/>
    <property type="match status" value="1"/>
</dbReference>
<dbReference type="Pfam" id="PF00265">
    <property type="entry name" value="TK"/>
    <property type="match status" value="1"/>
</dbReference>
<dbReference type="PIRSF" id="PIRSF035805">
    <property type="entry name" value="TK_cell"/>
    <property type="match status" value="1"/>
</dbReference>
<dbReference type="SUPFAM" id="SSF57716">
    <property type="entry name" value="Glucocorticoid receptor-like (DNA-binding domain)"/>
    <property type="match status" value="1"/>
</dbReference>
<dbReference type="SUPFAM" id="SSF52540">
    <property type="entry name" value="P-loop containing nucleoside triphosphate hydrolases"/>
    <property type="match status" value="1"/>
</dbReference>
<dbReference type="PROSITE" id="PS00603">
    <property type="entry name" value="TK_CELLULAR_TYPE"/>
    <property type="match status" value="1"/>
</dbReference>
<accession>Q7UFR1</accession>
<keyword id="KW-0067">ATP-binding</keyword>
<keyword id="KW-0963">Cytoplasm</keyword>
<keyword id="KW-0237">DNA synthesis</keyword>
<keyword id="KW-0418">Kinase</keyword>
<keyword id="KW-0479">Metal-binding</keyword>
<keyword id="KW-0547">Nucleotide-binding</keyword>
<keyword id="KW-1185">Reference proteome</keyword>
<keyword id="KW-0808">Transferase</keyword>
<keyword id="KW-0862">Zinc</keyword>
<name>KITH_RHOBA</name>
<sequence length="211" mass="23976">MAKLYFYYSTMNAGKSTVLLQSSYNYRERGMNTLILSPEIDTRFGSGKVASRIGIESESVSFNTSDNLLNLVRNETRINPLHCVLVDEAQFLTRTQVRQLSDVCDDLDIPVLAYGLRTDFQGNLFEGSEHLLAWADTLTELKTICHCGRKATMVLRVSESGQVIRDGEQVQIGGNERYQTVCRLHFKEAIYQRAEDELPLLDSNEPRQSER</sequence>
<comment type="catalytic activity">
    <reaction evidence="1">
        <text>thymidine + ATP = dTMP + ADP + H(+)</text>
        <dbReference type="Rhea" id="RHEA:19129"/>
        <dbReference type="ChEBI" id="CHEBI:15378"/>
        <dbReference type="ChEBI" id="CHEBI:17748"/>
        <dbReference type="ChEBI" id="CHEBI:30616"/>
        <dbReference type="ChEBI" id="CHEBI:63528"/>
        <dbReference type="ChEBI" id="CHEBI:456216"/>
        <dbReference type="EC" id="2.7.1.21"/>
    </reaction>
</comment>
<comment type="subunit">
    <text evidence="1">Homotetramer.</text>
</comment>
<comment type="subcellular location">
    <subcellularLocation>
        <location evidence="1">Cytoplasm</location>
    </subcellularLocation>
</comment>
<comment type="similarity">
    <text evidence="1">Belongs to the thymidine kinase family.</text>
</comment>